<organism>
    <name type="scientific">Photorhabdus laumondii subsp. laumondii (strain DSM 15139 / CIP 105565 / TT01)</name>
    <name type="common">Photorhabdus luminescens subsp. laumondii</name>
    <dbReference type="NCBI Taxonomy" id="243265"/>
    <lineage>
        <taxon>Bacteria</taxon>
        <taxon>Pseudomonadati</taxon>
        <taxon>Pseudomonadota</taxon>
        <taxon>Gammaproteobacteria</taxon>
        <taxon>Enterobacterales</taxon>
        <taxon>Morganellaceae</taxon>
        <taxon>Photorhabdus</taxon>
    </lineage>
</organism>
<keyword id="KW-0119">Carbohydrate metabolism</keyword>
<keyword id="KW-0413">Isomerase</keyword>
<keyword id="KW-0521">NADP</keyword>
<keyword id="KW-1185">Reference proteome</keyword>
<gene>
    <name evidence="1" type="primary">hldD</name>
    <name type="synonym">rfaD</name>
    <name type="ordered locus">plu4847</name>
</gene>
<sequence length="312" mass="35396">MIIVTGGAGFIGSNIVKALNDEGYKDILVVDNLKDGTKFINLADLDIADYMDKEEFIASILAGDDFGDIDAIFHEGACSSTTEWDGKYMMDNNYQYSKELLHYCLERRTPFLYASSAATYGGRTDNFIEERQYEKPLNVYGYSKFLFDQYVREILPQADSQICGFRYFNVYGPREGHKGSMASVAFHLNNQINQRQNPKLFAGSEGFQRDFIYVGDAAAVNLWFWKNGVSGIYNCGTGRAESFQAVADAVVECHKDKSLTVEHIDFPEHLKGRYQRFTQADLTKLRAAGYDKPFKTVAEGVTEYMHWLNQDK</sequence>
<feature type="chain" id="PRO_0000205804" description="ADP-L-glycero-D-manno-heptose-6-epimerase">
    <location>
        <begin position="1"/>
        <end position="312"/>
    </location>
</feature>
<feature type="active site" description="Proton acceptor" evidence="1">
    <location>
        <position position="140"/>
    </location>
</feature>
<feature type="active site" description="Proton acceptor" evidence="1">
    <location>
        <position position="178"/>
    </location>
</feature>
<feature type="binding site" evidence="1">
    <location>
        <begin position="10"/>
        <end position="11"/>
    </location>
    <ligand>
        <name>NADP(+)</name>
        <dbReference type="ChEBI" id="CHEBI:58349"/>
    </ligand>
</feature>
<feature type="binding site" evidence="1">
    <location>
        <begin position="31"/>
        <end position="32"/>
    </location>
    <ligand>
        <name>NADP(+)</name>
        <dbReference type="ChEBI" id="CHEBI:58349"/>
    </ligand>
</feature>
<feature type="binding site" evidence="1">
    <location>
        <position position="38"/>
    </location>
    <ligand>
        <name>NADP(+)</name>
        <dbReference type="ChEBI" id="CHEBI:58349"/>
    </ligand>
</feature>
<feature type="binding site" evidence="1">
    <location>
        <position position="53"/>
    </location>
    <ligand>
        <name>NADP(+)</name>
        <dbReference type="ChEBI" id="CHEBI:58349"/>
    </ligand>
</feature>
<feature type="binding site" evidence="1">
    <location>
        <begin position="75"/>
        <end position="79"/>
    </location>
    <ligand>
        <name>NADP(+)</name>
        <dbReference type="ChEBI" id="CHEBI:58349"/>
    </ligand>
</feature>
<feature type="binding site" evidence="1">
    <location>
        <position position="92"/>
    </location>
    <ligand>
        <name>NADP(+)</name>
        <dbReference type="ChEBI" id="CHEBI:58349"/>
    </ligand>
</feature>
<feature type="binding site" evidence="1">
    <location>
        <position position="144"/>
    </location>
    <ligand>
        <name>NADP(+)</name>
        <dbReference type="ChEBI" id="CHEBI:58349"/>
    </ligand>
</feature>
<feature type="binding site" evidence="1">
    <location>
        <position position="169"/>
    </location>
    <ligand>
        <name>substrate</name>
    </ligand>
</feature>
<feature type="binding site" evidence="1">
    <location>
        <position position="170"/>
    </location>
    <ligand>
        <name>NADP(+)</name>
        <dbReference type="ChEBI" id="CHEBI:58349"/>
    </ligand>
</feature>
<feature type="binding site" evidence="1">
    <location>
        <position position="178"/>
    </location>
    <ligand>
        <name>NADP(+)</name>
        <dbReference type="ChEBI" id="CHEBI:58349"/>
    </ligand>
</feature>
<feature type="binding site" evidence="1">
    <location>
        <position position="180"/>
    </location>
    <ligand>
        <name>substrate</name>
    </ligand>
</feature>
<feature type="binding site" evidence="1">
    <location>
        <position position="187"/>
    </location>
    <ligand>
        <name>substrate</name>
    </ligand>
</feature>
<feature type="binding site" evidence="1">
    <location>
        <begin position="201"/>
        <end position="204"/>
    </location>
    <ligand>
        <name>substrate</name>
    </ligand>
</feature>
<feature type="binding site" evidence="1">
    <location>
        <position position="209"/>
    </location>
    <ligand>
        <name>substrate</name>
    </ligand>
</feature>
<feature type="binding site" evidence="1">
    <location>
        <position position="274"/>
    </location>
    <ligand>
        <name>substrate</name>
    </ligand>
</feature>
<evidence type="ECO:0000255" key="1">
    <source>
        <dbReference type="HAMAP-Rule" id="MF_01601"/>
    </source>
</evidence>
<reference key="1">
    <citation type="journal article" date="2003" name="Nat. Biotechnol.">
        <title>The genome sequence of the entomopathogenic bacterium Photorhabdus luminescens.</title>
        <authorList>
            <person name="Duchaud E."/>
            <person name="Rusniok C."/>
            <person name="Frangeul L."/>
            <person name="Buchrieser C."/>
            <person name="Givaudan A."/>
            <person name="Taourit S."/>
            <person name="Bocs S."/>
            <person name="Boursaux-Eude C."/>
            <person name="Chandler M."/>
            <person name="Charles J.-F."/>
            <person name="Dassa E."/>
            <person name="Derose R."/>
            <person name="Derzelle S."/>
            <person name="Freyssinet G."/>
            <person name="Gaudriault S."/>
            <person name="Medigue C."/>
            <person name="Lanois A."/>
            <person name="Powell K."/>
            <person name="Siguier P."/>
            <person name="Vincent R."/>
            <person name="Wingate V."/>
            <person name="Zouine M."/>
            <person name="Glaser P."/>
            <person name="Boemare N."/>
            <person name="Danchin A."/>
            <person name="Kunst F."/>
        </authorList>
    </citation>
    <scope>NUCLEOTIDE SEQUENCE [LARGE SCALE GENOMIC DNA]</scope>
    <source>
        <strain>DSM 15139 / CIP 105565 / TT01</strain>
    </source>
</reference>
<dbReference type="EC" id="5.1.3.20" evidence="1"/>
<dbReference type="EMBL" id="BX571875">
    <property type="protein sequence ID" value="CAE17219.1"/>
    <property type="molecule type" value="Genomic_DNA"/>
</dbReference>
<dbReference type="RefSeq" id="WP_011148905.1">
    <property type="nucleotide sequence ID" value="NC_005126.1"/>
</dbReference>
<dbReference type="SMR" id="Q7MY46"/>
<dbReference type="STRING" id="243265.plu4847"/>
<dbReference type="GeneID" id="48851075"/>
<dbReference type="KEGG" id="plu:plu4847"/>
<dbReference type="eggNOG" id="COG0451">
    <property type="taxonomic scope" value="Bacteria"/>
</dbReference>
<dbReference type="HOGENOM" id="CLU_007383_1_3_6"/>
<dbReference type="OrthoDB" id="9803010at2"/>
<dbReference type="UniPathway" id="UPA00356">
    <property type="reaction ID" value="UER00440"/>
</dbReference>
<dbReference type="UniPathway" id="UPA00958"/>
<dbReference type="Proteomes" id="UP000002514">
    <property type="component" value="Chromosome"/>
</dbReference>
<dbReference type="GO" id="GO:0008712">
    <property type="term" value="F:ADP-glyceromanno-heptose 6-epimerase activity"/>
    <property type="evidence" value="ECO:0007669"/>
    <property type="project" value="UniProtKB-UniRule"/>
</dbReference>
<dbReference type="GO" id="GO:0050661">
    <property type="term" value="F:NADP binding"/>
    <property type="evidence" value="ECO:0007669"/>
    <property type="project" value="InterPro"/>
</dbReference>
<dbReference type="GO" id="GO:0097171">
    <property type="term" value="P:ADP-L-glycero-beta-D-manno-heptose biosynthetic process"/>
    <property type="evidence" value="ECO:0007669"/>
    <property type="project" value="UniProtKB-UniPathway"/>
</dbReference>
<dbReference type="GO" id="GO:0009244">
    <property type="term" value="P:lipopolysaccharide core region biosynthetic process"/>
    <property type="evidence" value="ECO:0007669"/>
    <property type="project" value="UniProtKB-UniPathway"/>
</dbReference>
<dbReference type="CDD" id="cd05248">
    <property type="entry name" value="ADP_GME_SDR_e"/>
    <property type="match status" value="1"/>
</dbReference>
<dbReference type="Gene3D" id="3.40.50.720">
    <property type="entry name" value="NAD(P)-binding Rossmann-like Domain"/>
    <property type="match status" value="1"/>
</dbReference>
<dbReference type="Gene3D" id="3.90.25.10">
    <property type="entry name" value="UDP-galactose 4-epimerase, domain 1"/>
    <property type="match status" value="1"/>
</dbReference>
<dbReference type="HAMAP" id="MF_01601">
    <property type="entry name" value="Heptose_epimerase"/>
    <property type="match status" value="1"/>
</dbReference>
<dbReference type="InterPro" id="IPR001509">
    <property type="entry name" value="Epimerase_deHydtase"/>
</dbReference>
<dbReference type="InterPro" id="IPR011912">
    <property type="entry name" value="Heptose_epim"/>
</dbReference>
<dbReference type="InterPro" id="IPR036291">
    <property type="entry name" value="NAD(P)-bd_dom_sf"/>
</dbReference>
<dbReference type="NCBIfam" id="TIGR02197">
    <property type="entry name" value="heptose_epim"/>
    <property type="match status" value="1"/>
</dbReference>
<dbReference type="NCBIfam" id="NF008360">
    <property type="entry name" value="PRK11150.1"/>
    <property type="match status" value="1"/>
</dbReference>
<dbReference type="PANTHER" id="PTHR43103:SF3">
    <property type="entry name" value="ADP-L-GLYCERO-D-MANNO-HEPTOSE-6-EPIMERASE"/>
    <property type="match status" value="1"/>
</dbReference>
<dbReference type="PANTHER" id="PTHR43103">
    <property type="entry name" value="NUCLEOSIDE-DIPHOSPHATE-SUGAR EPIMERASE"/>
    <property type="match status" value="1"/>
</dbReference>
<dbReference type="Pfam" id="PF01370">
    <property type="entry name" value="Epimerase"/>
    <property type="match status" value="1"/>
</dbReference>
<dbReference type="SUPFAM" id="SSF51735">
    <property type="entry name" value="NAD(P)-binding Rossmann-fold domains"/>
    <property type="match status" value="1"/>
</dbReference>
<comment type="function">
    <text evidence="1">Catalyzes the interconversion between ADP-D-glycero-beta-D-manno-heptose and ADP-L-glycero-beta-D-manno-heptose via an epimerization at carbon 6 of the heptose.</text>
</comment>
<comment type="catalytic activity">
    <reaction evidence="1">
        <text>ADP-D-glycero-beta-D-manno-heptose = ADP-L-glycero-beta-D-manno-heptose</text>
        <dbReference type="Rhea" id="RHEA:17577"/>
        <dbReference type="ChEBI" id="CHEBI:59967"/>
        <dbReference type="ChEBI" id="CHEBI:61506"/>
        <dbReference type="EC" id="5.1.3.20"/>
    </reaction>
</comment>
<comment type="cofactor">
    <cofactor evidence="1">
        <name>NADP(+)</name>
        <dbReference type="ChEBI" id="CHEBI:58349"/>
    </cofactor>
    <text evidence="1">Binds 1 NADP(+) per subunit.</text>
</comment>
<comment type="pathway">
    <text evidence="1">Nucleotide-sugar biosynthesis; ADP-L-glycero-beta-D-manno-heptose biosynthesis; ADP-L-glycero-beta-D-manno-heptose from D-glycero-beta-D-manno-heptose 7-phosphate: step 4/4.</text>
</comment>
<comment type="pathway">
    <text>Bacterial outer membrane biogenesis; LPS core biosynthesis.</text>
</comment>
<comment type="subunit">
    <text evidence="1">Homopentamer.</text>
</comment>
<comment type="domain">
    <text evidence="1">Contains a large N-terminal NADP-binding domain, and a smaller C-terminal substrate-binding domain.</text>
</comment>
<comment type="similarity">
    <text evidence="1">Belongs to the NAD(P)-dependent epimerase/dehydratase family. HldD subfamily.</text>
</comment>
<name>HLDD_PHOLL</name>
<protein>
    <recommendedName>
        <fullName evidence="1">ADP-L-glycero-D-manno-heptose-6-epimerase</fullName>
        <ecNumber evidence="1">5.1.3.20</ecNumber>
    </recommendedName>
    <alternativeName>
        <fullName evidence="1">ADP-L-glycero-beta-D-manno-heptose-6-epimerase</fullName>
        <shortName evidence="1">ADP-glyceromanno-heptose 6-epimerase</shortName>
        <shortName evidence="1">ADP-hep 6-epimerase</shortName>
        <shortName evidence="1">AGME</shortName>
    </alternativeName>
</protein>
<proteinExistence type="inferred from homology"/>
<accession>Q7MY46</accession>